<feature type="chain" id="PRO_0000446014" description="Aldehyde dehydrogenase">
    <location>
        <begin position="1"/>
        <end position="508"/>
    </location>
</feature>
<feature type="active site" evidence="1">
    <location>
        <position position="264"/>
    </location>
</feature>
<feature type="active site" evidence="2">
    <location>
        <position position="303"/>
    </location>
</feature>
<reference key="1">
    <citation type="submission" date="2006-12" db="EMBL/GenBank/DDBJ databases">
        <title>Complete sequence of chromosome 1 of Paracoccus denitrificans PD1222.</title>
        <authorList>
            <person name="Copeland A."/>
            <person name="Lucas S."/>
            <person name="Lapidus A."/>
            <person name="Barry K."/>
            <person name="Detter J.C."/>
            <person name="Glavina del Rio T."/>
            <person name="Hammon N."/>
            <person name="Israni S."/>
            <person name="Dalin E."/>
            <person name="Tice H."/>
            <person name="Pitluck S."/>
            <person name="Munk A.C."/>
            <person name="Brettin T."/>
            <person name="Bruce D."/>
            <person name="Han C."/>
            <person name="Tapia R."/>
            <person name="Gilna P."/>
            <person name="Schmutz J."/>
            <person name="Larimer F."/>
            <person name="Land M."/>
            <person name="Hauser L."/>
            <person name="Kyrpides N."/>
            <person name="Lykidis A."/>
            <person name="Spiro S."/>
            <person name="Richardson D.J."/>
            <person name="Moir J.W.B."/>
            <person name="Ferguson S.J."/>
            <person name="van Spanning R.J.M."/>
            <person name="Richardson P."/>
        </authorList>
    </citation>
    <scope>NUCLEOTIDE SEQUENCE [LARGE SCALE GENOMIC DNA]</scope>
    <source>
        <strain>Pd 1222</strain>
    </source>
</reference>
<reference key="2">
    <citation type="journal article" date="2013" name="J. Bacteriol.">
        <title>Paracoccus denitrificans PD1222 utilizes hypotaurine via transamination followed by spontaneous desulfination to yield acetaldehyde and, finally, acetate for growth.</title>
        <authorList>
            <person name="Felux A.K."/>
            <person name="Denger K."/>
            <person name="Weiss M."/>
            <person name="Cook A.M."/>
            <person name="Schleheck D."/>
        </authorList>
    </citation>
    <scope>FUNCTION</scope>
    <scope>CATALYTIC ACTIVITY</scope>
    <scope>PATHWAY</scope>
    <scope>INDUCTION</scope>
    <scope>IDENTIFICATION BY MASS SPECTROMETRY</scope>
    <source>
        <strain>Pd 1222</strain>
    </source>
</reference>
<name>ALDH_PARDP</name>
<protein>
    <recommendedName>
        <fullName evidence="4">Aldehyde dehydrogenase</fullName>
        <ecNumber evidence="3">1.2.1.3</ecNumber>
    </recommendedName>
    <alternativeName>
        <fullName evidence="5">Acetaldehyde dehydrogenase</fullName>
    </alternativeName>
</protein>
<organism>
    <name type="scientific">Paracoccus denitrificans (strain Pd 1222)</name>
    <dbReference type="NCBI Taxonomy" id="318586"/>
    <lineage>
        <taxon>Bacteria</taxon>
        <taxon>Pseudomonadati</taxon>
        <taxon>Pseudomonadota</taxon>
        <taxon>Alphaproteobacteria</taxon>
        <taxon>Rhodobacterales</taxon>
        <taxon>Paracoccaceae</taxon>
        <taxon>Paracoccus</taxon>
    </lineage>
</organism>
<comment type="function">
    <text evidence="3">Catalyzes the NAD(+)-dependent oxidation of acetaldehyde to acetate.</text>
</comment>
<comment type="catalytic activity">
    <reaction evidence="3">
        <text>acetaldehyde + NAD(+) + H2O = acetate + NADH + 2 H(+)</text>
        <dbReference type="Rhea" id="RHEA:25294"/>
        <dbReference type="ChEBI" id="CHEBI:15343"/>
        <dbReference type="ChEBI" id="CHEBI:15377"/>
        <dbReference type="ChEBI" id="CHEBI:15378"/>
        <dbReference type="ChEBI" id="CHEBI:30089"/>
        <dbReference type="ChEBI" id="CHEBI:57540"/>
        <dbReference type="ChEBI" id="CHEBI:57945"/>
        <dbReference type="EC" id="1.2.1.3"/>
    </reaction>
</comment>
<comment type="pathway">
    <text evidence="3">Organosulfur degradation.</text>
</comment>
<comment type="induction">
    <text evidence="3">Induced by growth on hypotaurine.</text>
</comment>
<comment type="similarity">
    <text evidence="5">Belongs to the aldehyde dehydrogenase family.</text>
</comment>
<accession>A1B4L2</accession>
<gene>
    <name evidence="4" type="primary">adh</name>
    <name evidence="6" type="ordered locus">Pden_2366</name>
</gene>
<evidence type="ECO:0000255" key="1">
    <source>
        <dbReference type="PROSITE-ProRule" id="PRU10007"/>
    </source>
</evidence>
<evidence type="ECO:0000255" key="2">
    <source>
        <dbReference type="PROSITE-ProRule" id="PRU10008"/>
    </source>
</evidence>
<evidence type="ECO:0000269" key="3">
    <source>
    </source>
</evidence>
<evidence type="ECO:0000303" key="4">
    <source>
    </source>
</evidence>
<evidence type="ECO:0000305" key="5"/>
<evidence type="ECO:0000312" key="6">
    <source>
        <dbReference type="EMBL" id="ABL70456.1"/>
    </source>
</evidence>
<sequence>MPNDQTHPFRGVNALPFEERYDNFIGGEWVAPVSGRYFTNTTPITGAEIGQIARSEAGDIELALDAAHAAKEKWGATSPAERANIMLKIADRMERNLELLATAETWDNGKPIRETMAADLPLAIDHFRYFAGVLRAQEGSISQIDDDTVAYHFHEPLGVVGQIIPWNFPLLMACWKLAPAIAAGNCVVLKPAEQTPAGIMVWANLIGDLLPPGVLNIVNGFGLEAGKPLASSNRIAKIAFTGETTTGRLIMQYASENLIPVTLELGGKSPNIFFADVAREDDDFFDKALEGFTMFALNQGEVCTCPSRVLIQESIYDKFMERAVQRVQAIKQGDPRESDTMIGAQASSEQKEKILSYLDIGKKEGAEVLTGGKAADLGGELSGGYYIEPTIFRGNNKMRIFQEEIFGPVVSVTTFKDQAEALEIANDTLYGLGAGVWSRDANTCYRMGRGIKAGRVWTNCYHAYPAHAAFGGYKQSGIGRETHKMMLDHYQQTKNMLVSYSPKKLGFF</sequence>
<proteinExistence type="evidence at protein level"/>
<keyword id="KW-0520">NAD</keyword>
<keyword id="KW-0560">Oxidoreductase</keyword>
<keyword id="KW-1185">Reference proteome</keyword>
<dbReference type="EC" id="1.2.1.3" evidence="3"/>
<dbReference type="EMBL" id="CP000489">
    <property type="protein sequence ID" value="ABL70456.1"/>
    <property type="molecule type" value="Genomic_DNA"/>
</dbReference>
<dbReference type="RefSeq" id="WP_011748649.1">
    <property type="nucleotide sequence ID" value="NC_008686.1"/>
</dbReference>
<dbReference type="SMR" id="A1B4L2"/>
<dbReference type="STRING" id="318586.Pden_2366"/>
<dbReference type="EnsemblBacteria" id="ABL70456">
    <property type="protein sequence ID" value="ABL70456"/>
    <property type="gene ID" value="Pden_2366"/>
</dbReference>
<dbReference type="GeneID" id="93450760"/>
<dbReference type="KEGG" id="pde:Pden_2366"/>
<dbReference type="eggNOG" id="COG1012">
    <property type="taxonomic scope" value="Bacteria"/>
</dbReference>
<dbReference type="HOGENOM" id="CLU_005391_0_2_5"/>
<dbReference type="OrthoDB" id="9812625at2"/>
<dbReference type="BioCyc" id="MetaCyc:MONOMER-18239"/>
<dbReference type="Proteomes" id="UP000000361">
    <property type="component" value="Chromosome 1"/>
</dbReference>
<dbReference type="GO" id="GO:0140087">
    <property type="term" value="F:acetaldehyde dehydrogenase (NAD+) activity"/>
    <property type="evidence" value="ECO:0007669"/>
    <property type="project" value="RHEA"/>
</dbReference>
<dbReference type="CDD" id="cd07116">
    <property type="entry name" value="ALDH_ACDHII-AcoD"/>
    <property type="match status" value="1"/>
</dbReference>
<dbReference type="FunFam" id="3.40.605.10:FF:000001">
    <property type="entry name" value="Aldehyde dehydrogenase 1"/>
    <property type="match status" value="1"/>
</dbReference>
<dbReference type="FunFam" id="3.40.309.10:FF:000017">
    <property type="entry name" value="Aldehyde dehydrogenase B"/>
    <property type="match status" value="1"/>
</dbReference>
<dbReference type="Gene3D" id="3.40.605.10">
    <property type="entry name" value="Aldehyde Dehydrogenase, Chain A, domain 1"/>
    <property type="match status" value="1"/>
</dbReference>
<dbReference type="Gene3D" id="3.40.309.10">
    <property type="entry name" value="Aldehyde Dehydrogenase, Chain A, domain 2"/>
    <property type="match status" value="1"/>
</dbReference>
<dbReference type="InterPro" id="IPR016161">
    <property type="entry name" value="Ald_DH/histidinol_DH"/>
</dbReference>
<dbReference type="InterPro" id="IPR016163">
    <property type="entry name" value="Ald_DH_C"/>
</dbReference>
<dbReference type="InterPro" id="IPR016160">
    <property type="entry name" value="Ald_DH_CS_CYS"/>
</dbReference>
<dbReference type="InterPro" id="IPR029510">
    <property type="entry name" value="Ald_DH_CS_GLU"/>
</dbReference>
<dbReference type="InterPro" id="IPR016162">
    <property type="entry name" value="Ald_DH_N"/>
</dbReference>
<dbReference type="InterPro" id="IPR015590">
    <property type="entry name" value="Aldehyde_DH_dom"/>
</dbReference>
<dbReference type="PANTHER" id="PTHR43111">
    <property type="entry name" value="ALDEHYDE DEHYDROGENASE B-RELATED"/>
    <property type="match status" value="1"/>
</dbReference>
<dbReference type="PANTHER" id="PTHR43111:SF1">
    <property type="entry name" value="ALDEHYDE DEHYDROGENASE B-RELATED"/>
    <property type="match status" value="1"/>
</dbReference>
<dbReference type="Pfam" id="PF00171">
    <property type="entry name" value="Aldedh"/>
    <property type="match status" value="1"/>
</dbReference>
<dbReference type="SUPFAM" id="SSF53720">
    <property type="entry name" value="ALDH-like"/>
    <property type="match status" value="1"/>
</dbReference>
<dbReference type="PROSITE" id="PS00070">
    <property type="entry name" value="ALDEHYDE_DEHYDR_CYS"/>
    <property type="match status" value="1"/>
</dbReference>
<dbReference type="PROSITE" id="PS00687">
    <property type="entry name" value="ALDEHYDE_DEHYDR_GLU"/>
    <property type="match status" value="1"/>
</dbReference>